<comment type="function">
    <text evidence="1">One of two assembly initiator proteins, it binds directly to the 5'-end of the 23S rRNA, where it nucleates assembly of the 50S subunit.</text>
</comment>
<comment type="function">
    <text evidence="1">Located at the polypeptide exit tunnel on the outside of the subunit.</text>
</comment>
<comment type="subunit">
    <text evidence="1">Part of the 50S ribosomal subunit.</text>
</comment>
<comment type="similarity">
    <text evidence="1">Belongs to the universal ribosomal protein uL24 family.</text>
</comment>
<reference key="1">
    <citation type="journal article" date="2007" name="Archaea">
        <title>The genome of Hyperthermus butylicus: a sulfur-reducing, peptide fermenting, neutrophilic Crenarchaeote growing up to 108 degrees C.</title>
        <authorList>
            <person name="Bruegger K."/>
            <person name="Chen L."/>
            <person name="Stark M."/>
            <person name="Zibat A."/>
            <person name="Redder P."/>
            <person name="Ruepp A."/>
            <person name="Awayez M."/>
            <person name="She Q."/>
            <person name="Garrett R.A."/>
            <person name="Klenk H.-P."/>
        </authorList>
    </citation>
    <scope>NUCLEOTIDE SEQUENCE [LARGE SCALE GENOMIC DNA]</scope>
    <source>
        <strain>DSM 5456 / JCM 9403 / PLM1-5</strain>
    </source>
</reference>
<accession>A2BMD0</accession>
<organism>
    <name type="scientific">Hyperthermus butylicus (strain DSM 5456 / JCM 9403 / PLM1-5)</name>
    <dbReference type="NCBI Taxonomy" id="415426"/>
    <lineage>
        <taxon>Archaea</taxon>
        <taxon>Thermoproteota</taxon>
        <taxon>Thermoprotei</taxon>
        <taxon>Desulfurococcales</taxon>
        <taxon>Pyrodictiaceae</taxon>
        <taxon>Hyperthermus</taxon>
    </lineage>
</organism>
<dbReference type="EMBL" id="CP000493">
    <property type="protein sequence ID" value="ABM81141.1"/>
    <property type="molecule type" value="Genomic_DNA"/>
</dbReference>
<dbReference type="RefSeq" id="WP_011822459.1">
    <property type="nucleotide sequence ID" value="NC_008818.1"/>
</dbReference>
<dbReference type="SMR" id="A2BMD0"/>
<dbReference type="STRING" id="415426.Hbut_1311"/>
<dbReference type="EnsemblBacteria" id="ABM81141">
    <property type="protein sequence ID" value="ABM81141"/>
    <property type="gene ID" value="Hbut_1311"/>
</dbReference>
<dbReference type="GeneID" id="4781544"/>
<dbReference type="KEGG" id="hbu:Hbut_1311"/>
<dbReference type="eggNOG" id="arCOG04094">
    <property type="taxonomic scope" value="Archaea"/>
</dbReference>
<dbReference type="HOGENOM" id="CLU_093240_2_1_2"/>
<dbReference type="OrthoDB" id="10899at2157"/>
<dbReference type="Proteomes" id="UP000002593">
    <property type="component" value="Chromosome"/>
</dbReference>
<dbReference type="GO" id="GO:0015934">
    <property type="term" value="C:large ribosomal subunit"/>
    <property type="evidence" value="ECO:0007669"/>
    <property type="project" value="InterPro"/>
</dbReference>
<dbReference type="GO" id="GO:0019843">
    <property type="term" value="F:rRNA binding"/>
    <property type="evidence" value="ECO:0007669"/>
    <property type="project" value="UniProtKB-UniRule"/>
</dbReference>
<dbReference type="GO" id="GO:0003735">
    <property type="term" value="F:structural constituent of ribosome"/>
    <property type="evidence" value="ECO:0007669"/>
    <property type="project" value="InterPro"/>
</dbReference>
<dbReference type="GO" id="GO:0006412">
    <property type="term" value="P:translation"/>
    <property type="evidence" value="ECO:0007669"/>
    <property type="project" value="UniProtKB-UniRule"/>
</dbReference>
<dbReference type="CDD" id="cd06089">
    <property type="entry name" value="KOW_RPL26"/>
    <property type="match status" value="1"/>
</dbReference>
<dbReference type="FunFam" id="2.30.30.30:FF:000009">
    <property type="entry name" value="60S ribosomal protein L26"/>
    <property type="match status" value="1"/>
</dbReference>
<dbReference type="Gene3D" id="2.30.30.30">
    <property type="match status" value="1"/>
</dbReference>
<dbReference type="HAMAP" id="MF_01326_A">
    <property type="entry name" value="Ribosomal_uL24_A"/>
    <property type="match status" value="1"/>
</dbReference>
<dbReference type="InterPro" id="IPR005824">
    <property type="entry name" value="KOW"/>
</dbReference>
<dbReference type="InterPro" id="IPR014722">
    <property type="entry name" value="Rib_uL2_dom2"/>
</dbReference>
<dbReference type="InterPro" id="IPR005825">
    <property type="entry name" value="Ribosomal_uL24_CS"/>
</dbReference>
<dbReference type="InterPro" id="IPR005756">
    <property type="entry name" value="Ribosomal_uL24_euk/arc"/>
</dbReference>
<dbReference type="InterPro" id="IPR041988">
    <property type="entry name" value="Ribosomal_uL24_KOW"/>
</dbReference>
<dbReference type="InterPro" id="IPR008991">
    <property type="entry name" value="Translation_prot_SH3-like_sf"/>
</dbReference>
<dbReference type="NCBIfam" id="TIGR01080">
    <property type="entry name" value="rplX_A_E"/>
    <property type="match status" value="1"/>
</dbReference>
<dbReference type="PANTHER" id="PTHR11143">
    <property type="entry name" value="60S RIBOSOMAL PROTEIN L26 FAMILY MEMBER"/>
    <property type="match status" value="1"/>
</dbReference>
<dbReference type="Pfam" id="PF00467">
    <property type="entry name" value="KOW"/>
    <property type="match status" value="1"/>
</dbReference>
<dbReference type="Pfam" id="PF16906">
    <property type="entry name" value="Ribosomal_L26"/>
    <property type="match status" value="1"/>
</dbReference>
<dbReference type="SMART" id="SM00739">
    <property type="entry name" value="KOW"/>
    <property type="match status" value="1"/>
</dbReference>
<dbReference type="SUPFAM" id="SSF50104">
    <property type="entry name" value="Translation proteins SH3-like domain"/>
    <property type="match status" value="1"/>
</dbReference>
<dbReference type="PROSITE" id="PS01108">
    <property type="entry name" value="RIBOSOMAL_L24"/>
    <property type="match status" value="1"/>
</dbReference>
<gene>
    <name evidence="1" type="primary">rpl24</name>
    <name type="ordered locus">Hbut_1311</name>
</gene>
<keyword id="KW-1185">Reference proteome</keyword>
<keyword id="KW-0687">Ribonucleoprotein</keyword>
<keyword id="KW-0689">Ribosomal protein</keyword>
<keyword id="KW-0694">RNA-binding</keyword>
<keyword id="KW-0699">rRNA-binding</keyword>
<sequence>MRWVKSSQPRKQRRALFNAPLHKRQKLMAAPLSPELRKQYGIRSLPVRVGDEVVIMRGDFKGHRGKVVRVDLRRMRIFVEGVTITNARGEPRYYPIHPSNVMIVSLNLDDERRRQIIERKRRQRELQLALMKAAAGGSAEAIGEEGKAS</sequence>
<feature type="chain" id="PRO_1000052227" description="Large ribosomal subunit protein uL24">
    <location>
        <begin position="1"/>
        <end position="149"/>
    </location>
</feature>
<protein>
    <recommendedName>
        <fullName evidence="1">Large ribosomal subunit protein uL24</fullName>
    </recommendedName>
    <alternativeName>
        <fullName evidence="2">50S ribosomal protein L24</fullName>
    </alternativeName>
</protein>
<proteinExistence type="inferred from homology"/>
<evidence type="ECO:0000255" key="1">
    <source>
        <dbReference type="HAMAP-Rule" id="MF_01326"/>
    </source>
</evidence>
<evidence type="ECO:0000305" key="2"/>
<name>RL24_HYPBU</name>